<gene>
    <name type="primary">Scamp5</name>
</gene>
<proteinExistence type="evidence at transcript level"/>
<reference key="1">
    <citation type="journal article" date="2000" name="J. Neurosci.">
        <title>Novel SCAMPs lacking NPF repeats: ubiquitous and synaptic vesicle-specific forms implicate SCAMPs in multiple membrane-trafficking functions.</title>
        <authorList>
            <person name="Fernandez-Chacon R."/>
            <person name="Suedhof T.C."/>
        </authorList>
    </citation>
    <scope>NUCLEOTIDE SEQUENCE [MRNA]</scope>
</reference>
<evidence type="ECO:0000250" key="1"/>
<evidence type="ECO:0000255" key="2"/>
<evidence type="ECO:0000305" key="3"/>
<organism>
    <name type="scientific">Rattus norvegicus</name>
    <name type="common">Rat</name>
    <dbReference type="NCBI Taxonomy" id="10116"/>
    <lineage>
        <taxon>Eukaryota</taxon>
        <taxon>Metazoa</taxon>
        <taxon>Chordata</taxon>
        <taxon>Craniata</taxon>
        <taxon>Vertebrata</taxon>
        <taxon>Euteleostomi</taxon>
        <taxon>Mammalia</taxon>
        <taxon>Eutheria</taxon>
        <taxon>Euarchontoglires</taxon>
        <taxon>Glires</taxon>
        <taxon>Rodentia</taxon>
        <taxon>Myomorpha</taxon>
        <taxon>Muroidea</taxon>
        <taxon>Muridae</taxon>
        <taxon>Murinae</taxon>
        <taxon>Rattus</taxon>
    </lineage>
</organism>
<name>SCAM5_RAT</name>
<comment type="function">
    <text evidence="1">Required for the calcium-dependent exocytosis of signal sequence-containing cytokines such as CCL5. Probably acts in cooperation with the SNARE machinery (By similarity).</text>
</comment>
<comment type="subunit">
    <text evidence="1">Interacts (via C-terminal part) with SYT1 and SYT2; interaction with synaptotagmins making a link with the SNARE molecules. Interacts with SLC9A7 (By similarity).</text>
</comment>
<comment type="subcellular location">
    <subcellularLocation>
        <location evidence="1">Cell membrane</location>
        <topology evidence="1">Multi-pass membrane protein</topology>
    </subcellularLocation>
    <subcellularLocation>
        <location evidence="1">Golgi apparatus membrane</location>
        <topology evidence="1">Multi-pass membrane protein</topology>
    </subcellularLocation>
    <subcellularLocation>
        <location evidence="1">Golgi apparatus</location>
        <location evidence="1">trans-Golgi network membrane</location>
        <topology evidence="1">Multi-pass membrane protein</topology>
    </subcellularLocation>
    <subcellularLocation>
        <location evidence="1">Recycling endosome membrane</location>
        <topology evidence="1">Multi-pass membrane protein</topology>
    </subcellularLocation>
    <subcellularLocation>
        <location evidence="1">Cytoplasmic vesicle</location>
        <location evidence="1">Secretory vesicle</location>
        <location evidence="1">Synaptic vesicle membrane</location>
        <topology evidence="1">Multi-pass membrane protein</topology>
    </subcellularLocation>
    <text evidence="1">Mainly localizes in Golgi apparatus membrane. Upon calcium-triggered exocytosis, it translocates to the cell membrane. Highly enriched in synaptic vesicles (By similarity).</text>
</comment>
<comment type="similarity">
    <text evidence="3">Belongs to the SCAMP family. SCAMP5 subfamily.</text>
</comment>
<protein>
    <recommendedName>
        <fullName>Secretory carrier-associated membrane protein 5</fullName>
        <shortName>Secretory carrier membrane protein 5</shortName>
    </recommendedName>
</protein>
<keyword id="KW-1003">Cell membrane</keyword>
<keyword id="KW-0968">Cytoplasmic vesicle</keyword>
<keyword id="KW-0967">Endosome</keyword>
<keyword id="KW-0268">Exocytosis</keyword>
<keyword id="KW-0333">Golgi apparatus</keyword>
<keyword id="KW-0472">Membrane</keyword>
<keyword id="KW-0653">Protein transport</keyword>
<keyword id="KW-1185">Reference proteome</keyword>
<keyword id="KW-0770">Synapse</keyword>
<keyword id="KW-0812">Transmembrane</keyword>
<keyword id="KW-1133">Transmembrane helix</keyword>
<keyword id="KW-0813">Transport</keyword>
<feature type="chain" id="PRO_0000191264" description="Secretory carrier-associated membrane protein 5">
    <location>
        <begin position="1"/>
        <end position="235"/>
    </location>
</feature>
<feature type="topological domain" description="Cytoplasmic" evidence="2">
    <location>
        <begin position="1"/>
        <end position="39"/>
    </location>
</feature>
<feature type="transmembrane region" description="Helical" evidence="2">
    <location>
        <begin position="40"/>
        <end position="60"/>
    </location>
</feature>
<feature type="topological domain" description="Extracellular" evidence="2">
    <location>
        <begin position="61"/>
        <end position="67"/>
    </location>
</feature>
<feature type="transmembrane region" description="Helical" evidence="2">
    <location>
        <begin position="68"/>
        <end position="88"/>
    </location>
</feature>
<feature type="topological domain" description="Cytoplasmic" evidence="2">
    <location>
        <begin position="89"/>
        <end position="102"/>
    </location>
</feature>
<feature type="transmembrane region" description="Helical" evidence="2">
    <location>
        <begin position="103"/>
        <end position="125"/>
    </location>
</feature>
<feature type="topological domain" description="Extracellular" evidence="2">
    <location>
        <begin position="126"/>
        <end position="148"/>
    </location>
</feature>
<feature type="transmembrane region" description="Helical" evidence="2">
    <location>
        <begin position="149"/>
        <end position="169"/>
    </location>
</feature>
<feature type="topological domain" description="Cytoplasmic" evidence="2">
    <location>
        <begin position="170"/>
        <end position="235"/>
    </location>
</feature>
<accession>Q9JKE3</accession>
<sequence length="235" mass="26098">MAEKVNNFPPLPKFIPLKPCFYQDFEADIPPQHLSLTKRLYYLWMLNSVTLAVNLVGCLAWLIGGGGATNFGLAFLWLILFTPCSYVCWFRPIYKAFKTDSSFSFMAFFFTFMAQLVISIIQAVGIPGWGVCGWIATISFFGTNIGSAVVMLIPTVMFTVVAVFSFIALSMVHKFYRGSGGSFSKAQEEWTTGAWKNPHVQQAAQNAAMGAAQGAMNQPQTQYSTTPNYTYSNEM</sequence>
<dbReference type="EMBL" id="AF240784">
    <property type="protein sequence ID" value="AAF64466.1"/>
    <property type="molecule type" value="mRNA"/>
</dbReference>
<dbReference type="RefSeq" id="NP_113914.1">
    <property type="nucleotide sequence ID" value="NM_031726.1"/>
</dbReference>
<dbReference type="SMR" id="Q9JKE3"/>
<dbReference type="BioGRID" id="249284">
    <property type="interactions" value="2"/>
</dbReference>
<dbReference type="FunCoup" id="Q9JKE3">
    <property type="interactions" value="1014"/>
</dbReference>
<dbReference type="IntAct" id="Q9JKE3">
    <property type="interactions" value="2"/>
</dbReference>
<dbReference type="MINT" id="Q9JKE3"/>
<dbReference type="STRING" id="10116.ENSRNOP00000074421"/>
<dbReference type="PhosphoSitePlus" id="Q9JKE3"/>
<dbReference type="SwissPalm" id="Q9JKE3"/>
<dbReference type="jPOST" id="Q9JKE3"/>
<dbReference type="PaxDb" id="10116-ENSRNOP00000033401"/>
<dbReference type="GeneID" id="65171"/>
<dbReference type="KEGG" id="rno:65171"/>
<dbReference type="AGR" id="RGD:68356"/>
<dbReference type="CTD" id="192683"/>
<dbReference type="RGD" id="68356">
    <property type="gene designation" value="Scamp5"/>
</dbReference>
<dbReference type="eggNOG" id="KOG3088">
    <property type="taxonomic scope" value="Eukaryota"/>
</dbReference>
<dbReference type="InParanoid" id="Q9JKE3"/>
<dbReference type="OrthoDB" id="242866at2759"/>
<dbReference type="PhylomeDB" id="Q9JKE3"/>
<dbReference type="PRO" id="PR:Q9JKE3"/>
<dbReference type="Proteomes" id="UP000002494">
    <property type="component" value="Unplaced"/>
</dbReference>
<dbReference type="GO" id="GO:0000139">
    <property type="term" value="C:Golgi membrane"/>
    <property type="evidence" value="ECO:0000250"/>
    <property type="project" value="UniProtKB"/>
</dbReference>
<dbReference type="GO" id="GO:0016020">
    <property type="term" value="C:membrane"/>
    <property type="evidence" value="ECO:0000266"/>
    <property type="project" value="RGD"/>
</dbReference>
<dbReference type="GO" id="GO:0005886">
    <property type="term" value="C:plasma membrane"/>
    <property type="evidence" value="ECO:0000250"/>
    <property type="project" value="UniProtKB"/>
</dbReference>
<dbReference type="GO" id="GO:0055038">
    <property type="term" value="C:recycling endosome membrane"/>
    <property type="evidence" value="ECO:0000266"/>
    <property type="project" value="RGD"/>
</dbReference>
<dbReference type="GO" id="GO:0008021">
    <property type="term" value="C:synaptic vesicle"/>
    <property type="evidence" value="ECO:0000314"/>
    <property type="project" value="RGD"/>
</dbReference>
<dbReference type="GO" id="GO:0030672">
    <property type="term" value="C:synaptic vesicle membrane"/>
    <property type="evidence" value="ECO:0000314"/>
    <property type="project" value="SynGO"/>
</dbReference>
<dbReference type="GO" id="GO:0032588">
    <property type="term" value="C:trans-Golgi network membrane"/>
    <property type="evidence" value="ECO:0000266"/>
    <property type="project" value="RGD"/>
</dbReference>
<dbReference type="GO" id="GO:0044877">
    <property type="term" value="F:protein-containing complex binding"/>
    <property type="evidence" value="ECO:0000266"/>
    <property type="project" value="RGD"/>
</dbReference>
<dbReference type="GO" id="GO:0006887">
    <property type="term" value="P:exocytosis"/>
    <property type="evidence" value="ECO:0007669"/>
    <property type="project" value="UniProtKB-KW"/>
</dbReference>
<dbReference type="GO" id="GO:0045806">
    <property type="term" value="P:negative regulation of endocytosis"/>
    <property type="evidence" value="ECO:0000266"/>
    <property type="project" value="RGD"/>
</dbReference>
<dbReference type="GO" id="GO:0045956">
    <property type="term" value="P:positive regulation of calcium ion-dependent exocytosis"/>
    <property type="evidence" value="ECO:0000250"/>
    <property type="project" value="UniProtKB"/>
</dbReference>
<dbReference type="GO" id="GO:0001819">
    <property type="term" value="P:positive regulation of cytokine production"/>
    <property type="evidence" value="ECO:0000250"/>
    <property type="project" value="UniProtKB"/>
</dbReference>
<dbReference type="GO" id="GO:0015031">
    <property type="term" value="P:protein transport"/>
    <property type="evidence" value="ECO:0000318"/>
    <property type="project" value="GO_Central"/>
</dbReference>
<dbReference type="GO" id="GO:1900242">
    <property type="term" value="P:regulation of synaptic vesicle endocytosis"/>
    <property type="evidence" value="ECO:0000314"/>
    <property type="project" value="SynGO"/>
</dbReference>
<dbReference type="GO" id="GO:0034976">
    <property type="term" value="P:response to endoplasmic reticulum stress"/>
    <property type="evidence" value="ECO:0000266"/>
    <property type="project" value="RGD"/>
</dbReference>
<dbReference type="InterPro" id="IPR007273">
    <property type="entry name" value="SCAMP"/>
</dbReference>
<dbReference type="PANTHER" id="PTHR10687:SF5">
    <property type="entry name" value="SECRETORY CARRIER-ASSOCIATED MEMBRANE PROTEIN 5"/>
    <property type="match status" value="1"/>
</dbReference>
<dbReference type="PANTHER" id="PTHR10687">
    <property type="entry name" value="SECRETORY CARRIER-ASSOCIATED MEMBRANE PROTEIN SCAMP"/>
    <property type="match status" value="1"/>
</dbReference>
<dbReference type="Pfam" id="PF04144">
    <property type="entry name" value="SCAMP"/>
    <property type="match status" value="1"/>
</dbReference>